<feature type="chain" id="PRO_0000286622" description="Nuclear envelope phosphatase-regulatory subunit 1 homolog">
    <location>
        <begin position="1"/>
        <end position="131"/>
    </location>
</feature>
<feature type="transmembrane region" description="Helical" evidence="2">
    <location>
        <begin position="33"/>
        <end position="53"/>
    </location>
</feature>
<feature type="transmembrane region" description="Helical" evidence="2">
    <location>
        <begin position="68"/>
        <end position="88"/>
    </location>
</feature>
<feature type="splice variant" id="VSP_025132" description="In isoform 2." evidence="3">
    <original>KLLAV</original>
    <variation>I</variation>
    <location>
        <begin position="32"/>
        <end position="36"/>
    </location>
</feature>
<proteinExistence type="evidence at transcript level"/>
<comment type="function">
    <text evidence="1">May form with the serine/threonine protein phosphatase l(1)G0269 an active complex dephosphorylating and activating lipin-like phosphatases. Lipins are phosphatidate phosphatases that catalyze the conversion of phosphatidic acid to diacylglycerol and control the metabolism of fatty acids at different levels (By similarity).</text>
</comment>
<comment type="subcellular location">
    <subcellularLocation>
        <location evidence="1">Nucleus membrane</location>
        <topology evidence="1">Multi-pass membrane protein</topology>
    </subcellularLocation>
    <subcellularLocation>
        <location evidence="1">Cytoplasm</location>
    </subcellularLocation>
</comment>
<comment type="alternative products">
    <event type="alternative splicing"/>
    <isoform>
        <id>Q8T0B1-1</id>
        <name>1</name>
        <sequence type="displayed"/>
    </isoform>
    <isoform>
        <id>Q8T0B1-2</id>
        <name>2</name>
        <sequence type="described" ref="VSP_025132"/>
    </isoform>
</comment>
<comment type="similarity">
    <text evidence="3">Belongs to the CNEP1R1 family.</text>
</comment>
<keyword id="KW-0025">Alternative splicing</keyword>
<keyword id="KW-0963">Cytoplasm</keyword>
<keyword id="KW-0443">Lipid metabolism</keyword>
<keyword id="KW-0472">Membrane</keyword>
<keyword id="KW-0539">Nucleus</keyword>
<keyword id="KW-1185">Reference proteome</keyword>
<keyword id="KW-0812">Transmembrane</keyword>
<keyword id="KW-1133">Transmembrane helix</keyword>
<gene>
    <name evidence="4" type="primary">Cnep1r2</name>
    <name evidence="4" type="ORF">CG8009</name>
</gene>
<evidence type="ECO:0000250" key="1"/>
<evidence type="ECO:0000255" key="2"/>
<evidence type="ECO:0000305" key="3"/>
<evidence type="ECO:0000312" key="4">
    <source>
        <dbReference type="FlyBase" id="FBgn0036090"/>
    </source>
</evidence>
<evidence type="ECO:0000312" key="5">
    <source>
        <dbReference type="Proteomes" id="UP000000803"/>
    </source>
</evidence>
<sequence>MEPSACEDLKAFERRLTEVVSSYRPSTFRWRKLLAVVLSAMSMCTAISAWYWLRDPRTTVVPLTESLWIHPVFTVATLTLVVLFILGIQKLVIAPQIITSRTRMVLGDFNMSCDDTGKLILKPRQSNNNST</sequence>
<organism evidence="5">
    <name type="scientific">Drosophila melanogaster</name>
    <name type="common">Fruit fly</name>
    <dbReference type="NCBI Taxonomy" id="7227"/>
    <lineage>
        <taxon>Eukaryota</taxon>
        <taxon>Metazoa</taxon>
        <taxon>Ecdysozoa</taxon>
        <taxon>Arthropoda</taxon>
        <taxon>Hexapoda</taxon>
        <taxon>Insecta</taxon>
        <taxon>Pterygota</taxon>
        <taxon>Neoptera</taxon>
        <taxon>Endopterygota</taxon>
        <taxon>Diptera</taxon>
        <taxon>Brachycera</taxon>
        <taxon>Muscomorpha</taxon>
        <taxon>Ephydroidea</taxon>
        <taxon>Drosophilidae</taxon>
        <taxon>Drosophila</taxon>
        <taxon>Sophophora</taxon>
    </lineage>
</organism>
<protein>
    <recommendedName>
        <fullName evidence="3">Nuclear envelope phosphatase-regulatory subunit 1 homolog</fullName>
    </recommendedName>
    <alternativeName>
        <fullName evidence="4">CTD nuclear envelope phosphatase 1 regulatory subunit 2</fullName>
    </alternativeName>
    <alternativeName>
        <fullName>Transmembrane protein 188</fullName>
    </alternativeName>
</protein>
<name>NEPR1_DROME</name>
<accession>Q8T0B1</accession>
<accession>Q9VTA4</accession>
<reference key="1">
    <citation type="journal article" date="2000" name="Science">
        <title>The genome sequence of Drosophila melanogaster.</title>
        <authorList>
            <person name="Adams M.D."/>
            <person name="Celniker S.E."/>
            <person name="Holt R.A."/>
            <person name="Evans C.A."/>
            <person name="Gocayne J.D."/>
            <person name="Amanatides P.G."/>
            <person name="Scherer S.E."/>
            <person name="Li P.W."/>
            <person name="Hoskins R.A."/>
            <person name="Galle R.F."/>
            <person name="George R.A."/>
            <person name="Lewis S.E."/>
            <person name="Richards S."/>
            <person name="Ashburner M."/>
            <person name="Henderson S.N."/>
            <person name="Sutton G.G."/>
            <person name="Wortman J.R."/>
            <person name="Yandell M.D."/>
            <person name="Zhang Q."/>
            <person name="Chen L.X."/>
            <person name="Brandon R.C."/>
            <person name="Rogers Y.-H.C."/>
            <person name="Blazej R.G."/>
            <person name="Champe M."/>
            <person name="Pfeiffer B.D."/>
            <person name="Wan K.H."/>
            <person name="Doyle C."/>
            <person name="Baxter E.G."/>
            <person name="Helt G."/>
            <person name="Nelson C.R."/>
            <person name="Miklos G.L.G."/>
            <person name="Abril J.F."/>
            <person name="Agbayani A."/>
            <person name="An H.-J."/>
            <person name="Andrews-Pfannkoch C."/>
            <person name="Baldwin D."/>
            <person name="Ballew R.M."/>
            <person name="Basu A."/>
            <person name="Baxendale J."/>
            <person name="Bayraktaroglu L."/>
            <person name="Beasley E.M."/>
            <person name="Beeson K.Y."/>
            <person name="Benos P.V."/>
            <person name="Berman B.P."/>
            <person name="Bhandari D."/>
            <person name="Bolshakov S."/>
            <person name="Borkova D."/>
            <person name="Botchan M.R."/>
            <person name="Bouck J."/>
            <person name="Brokstein P."/>
            <person name="Brottier P."/>
            <person name="Burtis K.C."/>
            <person name="Busam D.A."/>
            <person name="Butler H."/>
            <person name="Cadieu E."/>
            <person name="Center A."/>
            <person name="Chandra I."/>
            <person name="Cherry J.M."/>
            <person name="Cawley S."/>
            <person name="Dahlke C."/>
            <person name="Davenport L.B."/>
            <person name="Davies P."/>
            <person name="de Pablos B."/>
            <person name="Delcher A."/>
            <person name="Deng Z."/>
            <person name="Mays A.D."/>
            <person name="Dew I."/>
            <person name="Dietz S.M."/>
            <person name="Dodson K."/>
            <person name="Doup L.E."/>
            <person name="Downes M."/>
            <person name="Dugan-Rocha S."/>
            <person name="Dunkov B.C."/>
            <person name="Dunn P."/>
            <person name="Durbin K.J."/>
            <person name="Evangelista C.C."/>
            <person name="Ferraz C."/>
            <person name="Ferriera S."/>
            <person name="Fleischmann W."/>
            <person name="Fosler C."/>
            <person name="Gabrielian A.E."/>
            <person name="Garg N.S."/>
            <person name="Gelbart W.M."/>
            <person name="Glasser K."/>
            <person name="Glodek A."/>
            <person name="Gong F."/>
            <person name="Gorrell J.H."/>
            <person name="Gu Z."/>
            <person name="Guan P."/>
            <person name="Harris M."/>
            <person name="Harris N.L."/>
            <person name="Harvey D.A."/>
            <person name="Heiman T.J."/>
            <person name="Hernandez J.R."/>
            <person name="Houck J."/>
            <person name="Hostin D."/>
            <person name="Houston K.A."/>
            <person name="Howland T.J."/>
            <person name="Wei M.-H."/>
            <person name="Ibegwam C."/>
            <person name="Jalali M."/>
            <person name="Kalush F."/>
            <person name="Karpen G.H."/>
            <person name="Ke Z."/>
            <person name="Kennison J.A."/>
            <person name="Ketchum K.A."/>
            <person name="Kimmel B.E."/>
            <person name="Kodira C.D."/>
            <person name="Kraft C.L."/>
            <person name="Kravitz S."/>
            <person name="Kulp D."/>
            <person name="Lai Z."/>
            <person name="Lasko P."/>
            <person name="Lei Y."/>
            <person name="Levitsky A.A."/>
            <person name="Li J.H."/>
            <person name="Li Z."/>
            <person name="Liang Y."/>
            <person name="Lin X."/>
            <person name="Liu X."/>
            <person name="Mattei B."/>
            <person name="McIntosh T.C."/>
            <person name="McLeod M.P."/>
            <person name="McPherson D."/>
            <person name="Merkulov G."/>
            <person name="Milshina N.V."/>
            <person name="Mobarry C."/>
            <person name="Morris J."/>
            <person name="Moshrefi A."/>
            <person name="Mount S.M."/>
            <person name="Moy M."/>
            <person name="Murphy B."/>
            <person name="Murphy L."/>
            <person name="Muzny D.M."/>
            <person name="Nelson D.L."/>
            <person name="Nelson D.R."/>
            <person name="Nelson K.A."/>
            <person name="Nixon K."/>
            <person name="Nusskern D.R."/>
            <person name="Pacleb J.M."/>
            <person name="Palazzolo M."/>
            <person name="Pittman G.S."/>
            <person name="Pan S."/>
            <person name="Pollard J."/>
            <person name="Puri V."/>
            <person name="Reese M.G."/>
            <person name="Reinert K."/>
            <person name="Remington K."/>
            <person name="Saunders R.D.C."/>
            <person name="Scheeler F."/>
            <person name="Shen H."/>
            <person name="Shue B.C."/>
            <person name="Siden-Kiamos I."/>
            <person name="Simpson M."/>
            <person name="Skupski M.P."/>
            <person name="Smith T.J."/>
            <person name="Spier E."/>
            <person name="Spradling A.C."/>
            <person name="Stapleton M."/>
            <person name="Strong R."/>
            <person name="Sun E."/>
            <person name="Svirskas R."/>
            <person name="Tector C."/>
            <person name="Turner R."/>
            <person name="Venter E."/>
            <person name="Wang A.H."/>
            <person name="Wang X."/>
            <person name="Wang Z.-Y."/>
            <person name="Wassarman D.A."/>
            <person name="Weinstock G.M."/>
            <person name="Weissenbach J."/>
            <person name="Williams S.M."/>
            <person name="Woodage T."/>
            <person name="Worley K.C."/>
            <person name="Wu D."/>
            <person name="Yang S."/>
            <person name="Yao Q.A."/>
            <person name="Ye J."/>
            <person name="Yeh R.-F."/>
            <person name="Zaveri J.S."/>
            <person name="Zhan M."/>
            <person name="Zhang G."/>
            <person name="Zhao Q."/>
            <person name="Zheng L."/>
            <person name="Zheng X.H."/>
            <person name="Zhong F.N."/>
            <person name="Zhong W."/>
            <person name="Zhou X."/>
            <person name="Zhu S.C."/>
            <person name="Zhu X."/>
            <person name="Smith H.O."/>
            <person name="Gibbs R.A."/>
            <person name="Myers E.W."/>
            <person name="Rubin G.M."/>
            <person name="Venter J.C."/>
        </authorList>
    </citation>
    <scope>NUCLEOTIDE SEQUENCE [LARGE SCALE GENOMIC DNA]</scope>
    <source>
        <strain>Berkeley</strain>
    </source>
</reference>
<reference key="2">
    <citation type="journal article" date="2002" name="Genome Biol.">
        <title>Annotation of the Drosophila melanogaster euchromatic genome: a systematic review.</title>
        <authorList>
            <person name="Misra S."/>
            <person name="Crosby M.A."/>
            <person name="Mungall C.J."/>
            <person name="Matthews B.B."/>
            <person name="Campbell K.S."/>
            <person name="Hradecky P."/>
            <person name="Huang Y."/>
            <person name="Kaminker J.S."/>
            <person name="Millburn G.H."/>
            <person name="Prochnik S.E."/>
            <person name="Smith C.D."/>
            <person name="Tupy J.L."/>
            <person name="Whitfield E.J."/>
            <person name="Bayraktaroglu L."/>
            <person name="Berman B.P."/>
            <person name="Bettencourt B.R."/>
            <person name="Celniker S.E."/>
            <person name="de Grey A.D.N.J."/>
            <person name="Drysdale R.A."/>
            <person name="Harris N.L."/>
            <person name="Richter J."/>
            <person name="Russo S."/>
            <person name="Schroeder A.J."/>
            <person name="Shu S.Q."/>
            <person name="Stapleton M."/>
            <person name="Yamada C."/>
            <person name="Ashburner M."/>
            <person name="Gelbart W.M."/>
            <person name="Rubin G.M."/>
            <person name="Lewis S.E."/>
        </authorList>
    </citation>
    <scope>GENOME REANNOTATION</scope>
    <scope>ALTERNATIVE SPLICING</scope>
    <source>
        <strain>Berkeley</strain>
    </source>
</reference>
<reference key="3">
    <citation type="submission" date="2003-01" db="EMBL/GenBank/DDBJ databases">
        <authorList>
            <person name="Stapleton M."/>
            <person name="Brokstein P."/>
            <person name="Hong L."/>
            <person name="Agbayani A."/>
            <person name="Carlson J.W."/>
            <person name="Champe M."/>
            <person name="Chavez C."/>
            <person name="Dorsett V."/>
            <person name="Dresnek D."/>
            <person name="Farfan D."/>
            <person name="Frise E."/>
            <person name="George R.A."/>
            <person name="Gonzalez M."/>
            <person name="Guarin H."/>
            <person name="Kronmiller B."/>
            <person name="Li P.W."/>
            <person name="Liao G."/>
            <person name="Miranda A."/>
            <person name="Mungall C.J."/>
            <person name="Nunoo J."/>
            <person name="Pacleb J.M."/>
            <person name="Paragas V."/>
            <person name="Park S."/>
            <person name="Patel S."/>
            <person name="Phouanenavong S."/>
            <person name="Wan K.H."/>
            <person name="Yu C."/>
            <person name="Lewis S.E."/>
            <person name="Rubin G.M."/>
            <person name="Celniker S.E."/>
        </authorList>
    </citation>
    <scope>NUCLEOTIDE SEQUENCE [LARGE SCALE MRNA] (ISOFORM 1)</scope>
    <source>
        <strain>Berkeley</strain>
        <tissue>Embryo</tissue>
    </source>
</reference>
<dbReference type="EMBL" id="AE014296">
    <property type="protein sequence ID" value="AAF50148.1"/>
    <property type="molecule type" value="Genomic_DNA"/>
</dbReference>
<dbReference type="EMBL" id="AE014296">
    <property type="protein sequence ID" value="AAN11906.1"/>
    <property type="molecule type" value="Genomic_DNA"/>
</dbReference>
<dbReference type="EMBL" id="AY069435">
    <property type="protein sequence ID" value="AAL39580.1"/>
    <property type="molecule type" value="mRNA"/>
</dbReference>
<dbReference type="RefSeq" id="NP_648400.1">
    <molecule id="Q8T0B1-1"/>
    <property type="nucleotide sequence ID" value="NM_140143.3"/>
</dbReference>
<dbReference type="RefSeq" id="NP_729617.1">
    <molecule id="Q8T0B1-2"/>
    <property type="nucleotide sequence ID" value="NM_168415.2"/>
</dbReference>
<dbReference type="SMR" id="Q8T0B1"/>
<dbReference type="BioGRID" id="64583">
    <property type="interactions" value="2"/>
</dbReference>
<dbReference type="FunCoup" id="Q8T0B1">
    <property type="interactions" value="797"/>
</dbReference>
<dbReference type="IntAct" id="Q8T0B1">
    <property type="interactions" value="2"/>
</dbReference>
<dbReference type="STRING" id="7227.FBpp0075984"/>
<dbReference type="GlyGen" id="Q8T0B1">
    <property type="glycosylation" value="2 sites"/>
</dbReference>
<dbReference type="PaxDb" id="7227-FBpp0075984"/>
<dbReference type="DNASU" id="39204"/>
<dbReference type="EnsemblMetazoa" id="FBtr0076254">
    <molecule id="Q8T0B1-2"/>
    <property type="protein sequence ID" value="FBpp0075983"/>
    <property type="gene ID" value="FBgn0036090"/>
</dbReference>
<dbReference type="EnsemblMetazoa" id="FBtr0076255">
    <molecule id="Q8T0B1-1"/>
    <property type="protein sequence ID" value="FBpp0075984"/>
    <property type="gene ID" value="FBgn0036090"/>
</dbReference>
<dbReference type="GeneID" id="39204"/>
<dbReference type="KEGG" id="dme:Dmel_CG8009"/>
<dbReference type="UCSC" id="CG8009-RA">
    <molecule id="Q8T0B1-1"/>
    <property type="organism name" value="d. melanogaster"/>
</dbReference>
<dbReference type="AGR" id="FB:FBgn0036090"/>
<dbReference type="CTD" id="39204"/>
<dbReference type="FlyBase" id="FBgn0036090">
    <property type="gene designation" value="Cnep1r2"/>
</dbReference>
<dbReference type="VEuPathDB" id="VectorBase:FBgn0036090"/>
<dbReference type="eggNOG" id="KOG4606">
    <property type="taxonomic scope" value="Eukaryota"/>
</dbReference>
<dbReference type="GeneTree" id="ENSGT00390000008576"/>
<dbReference type="InParanoid" id="Q8T0B1"/>
<dbReference type="OMA" id="NHPFFAI"/>
<dbReference type="OrthoDB" id="5786980at2759"/>
<dbReference type="PhylomeDB" id="Q8T0B1"/>
<dbReference type="Reactome" id="R-DME-4419969">
    <property type="pathway name" value="Depolymerization of the Nuclear Lamina"/>
</dbReference>
<dbReference type="BioGRID-ORCS" id="39204">
    <property type="hits" value="0 hits in 1 CRISPR screen"/>
</dbReference>
<dbReference type="GenomeRNAi" id="39204"/>
<dbReference type="PRO" id="PR:Q8T0B1"/>
<dbReference type="Proteomes" id="UP000000803">
    <property type="component" value="Chromosome 3L"/>
</dbReference>
<dbReference type="Bgee" id="FBgn0036090">
    <property type="expression patterns" value="Expressed in head cyst cell (Drosophila) in testis and 133 other cell types or tissues"/>
</dbReference>
<dbReference type="ExpressionAtlas" id="Q8T0B1">
    <property type="expression patterns" value="baseline and differential"/>
</dbReference>
<dbReference type="GO" id="GO:0005737">
    <property type="term" value="C:cytoplasm"/>
    <property type="evidence" value="ECO:0000250"/>
    <property type="project" value="UniProtKB"/>
</dbReference>
<dbReference type="GO" id="GO:0005789">
    <property type="term" value="C:endoplasmic reticulum membrane"/>
    <property type="evidence" value="ECO:0000250"/>
    <property type="project" value="FlyBase"/>
</dbReference>
<dbReference type="GO" id="GO:0071595">
    <property type="term" value="C:Nem1-Spo7 phosphatase complex"/>
    <property type="evidence" value="ECO:0000250"/>
    <property type="project" value="UniProtKB"/>
</dbReference>
<dbReference type="GO" id="GO:0031965">
    <property type="term" value="C:nuclear membrane"/>
    <property type="evidence" value="ECO:0000250"/>
    <property type="project" value="UniProtKB"/>
</dbReference>
<dbReference type="GO" id="GO:0019888">
    <property type="term" value="F:protein phosphatase regulator activity"/>
    <property type="evidence" value="ECO:0000250"/>
    <property type="project" value="UniProtKB"/>
</dbReference>
<dbReference type="GO" id="GO:0006629">
    <property type="term" value="P:lipid metabolic process"/>
    <property type="evidence" value="ECO:0007669"/>
    <property type="project" value="UniProtKB-KW"/>
</dbReference>
<dbReference type="GO" id="GO:0010867">
    <property type="term" value="P:positive regulation of triglyceride biosynthetic process"/>
    <property type="evidence" value="ECO:0000250"/>
    <property type="project" value="UniProtKB"/>
</dbReference>
<dbReference type="InterPro" id="IPR019168">
    <property type="entry name" value="NEP1-R1"/>
</dbReference>
<dbReference type="PANTHER" id="PTHR20996">
    <property type="entry name" value="NUCLEAR ENVELOPE PHOSPHATASE-REGULATORY SUBUNIT 1"/>
    <property type="match status" value="1"/>
</dbReference>
<dbReference type="PANTHER" id="PTHR20996:SF1">
    <property type="entry name" value="NUCLEAR ENVELOPE PHOSPHATASE-REGULATORY SUBUNIT 1"/>
    <property type="match status" value="1"/>
</dbReference>
<dbReference type="Pfam" id="PF09771">
    <property type="entry name" value="Tmemb_18A"/>
    <property type="match status" value="1"/>
</dbReference>